<name>ERPA_ECO55</name>
<comment type="function">
    <text evidence="1">Required for insertion of 4Fe-4S clusters for at least IspG.</text>
</comment>
<comment type="cofactor">
    <cofactor evidence="1">
        <name>iron-sulfur cluster</name>
        <dbReference type="ChEBI" id="CHEBI:30408"/>
    </cofactor>
    <text evidence="1">Binds 1 iron-sulfur cluster per subunit.</text>
</comment>
<comment type="subunit">
    <text evidence="1">Homodimer.</text>
</comment>
<comment type="similarity">
    <text evidence="1">Belongs to the HesB/IscA family.</text>
</comment>
<keyword id="KW-0408">Iron</keyword>
<keyword id="KW-0411">Iron-sulfur</keyword>
<keyword id="KW-0479">Metal-binding</keyword>
<keyword id="KW-1185">Reference proteome</keyword>
<gene>
    <name evidence="1" type="primary">erpA</name>
    <name type="ordered locus">EC55989_0151</name>
</gene>
<reference key="1">
    <citation type="journal article" date="2009" name="PLoS Genet.">
        <title>Organised genome dynamics in the Escherichia coli species results in highly diverse adaptive paths.</title>
        <authorList>
            <person name="Touchon M."/>
            <person name="Hoede C."/>
            <person name="Tenaillon O."/>
            <person name="Barbe V."/>
            <person name="Baeriswyl S."/>
            <person name="Bidet P."/>
            <person name="Bingen E."/>
            <person name="Bonacorsi S."/>
            <person name="Bouchier C."/>
            <person name="Bouvet O."/>
            <person name="Calteau A."/>
            <person name="Chiapello H."/>
            <person name="Clermont O."/>
            <person name="Cruveiller S."/>
            <person name="Danchin A."/>
            <person name="Diard M."/>
            <person name="Dossat C."/>
            <person name="Karoui M.E."/>
            <person name="Frapy E."/>
            <person name="Garry L."/>
            <person name="Ghigo J.M."/>
            <person name="Gilles A.M."/>
            <person name="Johnson J."/>
            <person name="Le Bouguenec C."/>
            <person name="Lescat M."/>
            <person name="Mangenot S."/>
            <person name="Martinez-Jehanne V."/>
            <person name="Matic I."/>
            <person name="Nassif X."/>
            <person name="Oztas S."/>
            <person name="Petit M.A."/>
            <person name="Pichon C."/>
            <person name="Rouy Z."/>
            <person name="Ruf C.S."/>
            <person name="Schneider D."/>
            <person name="Tourret J."/>
            <person name="Vacherie B."/>
            <person name="Vallenet D."/>
            <person name="Medigue C."/>
            <person name="Rocha E.P.C."/>
            <person name="Denamur E."/>
        </authorList>
    </citation>
    <scope>NUCLEOTIDE SEQUENCE [LARGE SCALE GENOMIC DNA]</scope>
    <source>
        <strain>55989 / EAEC</strain>
    </source>
</reference>
<accession>B7LGL8</accession>
<protein>
    <recommendedName>
        <fullName evidence="1">Iron-sulfur cluster insertion protein ErpA</fullName>
    </recommendedName>
</protein>
<organism>
    <name type="scientific">Escherichia coli (strain 55989 / EAEC)</name>
    <dbReference type="NCBI Taxonomy" id="585055"/>
    <lineage>
        <taxon>Bacteria</taxon>
        <taxon>Pseudomonadati</taxon>
        <taxon>Pseudomonadota</taxon>
        <taxon>Gammaproteobacteria</taxon>
        <taxon>Enterobacterales</taxon>
        <taxon>Enterobacteriaceae</taxon>
        <taxon>Escherichia</taxon>
    </lineage>
</organism>
<sequence length="114" mass="12100">MSDDVALPLEFTDAAANKVKSLIADEDNPNLKLRVYITGGGCSGFQYGFTFDDQVNEGDMTIEKQGVGLVVDPMSLQYLVGGSVDYTEGLEGSRFIVTNPNAKSTCGCGSSFSI</sequence>
<evidence type="ECO:0000255" key="1">
    <source>
        <dbReference type="HAMAP-Rule" id="MF_01380"/>
    </source>
</evidence>
<dbReference type="EMBL" id="CU928145">
    <property type="protein sequence ID" value="CAU96037.1"/>
    <property type="molecule type" value="Genomic_DNA"/>
</dbReference>
<dbReference type="RefSeq" id="WP_001295564.1">
    <property type="nucleotide sequence ID" value="NZ_CP028304.1"/>
</dbReference>
<dbReference type="SMR" id="B7LGL8"/>
<dbReference type="GeneID" id="93777270"/>
<dbReference type="KEGG" id="eck:EC55989_0151"/>
<dbReference type="HOGENOM" id="CLU_069054_5_3_6"/>
<dbReference type="Proteomes" id="UP000000746">
    <property type="component" value="Chromosome"/>
</dbReference>
<dbReference type="GO" id="GO:0005829">
    <property type="term" value="C:cytosol"/>
    <property type="evidence" value="ECO:0007669"/>
    <property type="project" value="TreeGrafter"/>
</dbReference>
<dbReference type="GO" id="GO:0051537">
    <property type="term" value="F:2 iron, 2 sulfur cluster binding"/>
    <property type="evidence" value="ECO:0007669"/>
    <property type="project" value="TreeGrafter"/>
</dbReference>
<dbReference type="GO" id="GO:0051539">
    <property type="term" value="F:4 iron, 4 sulfur cluster binding"/>
    <property type="evidence" value="ECO:0007669"/>
    <property type="project" value="TreeGrafter"/>
</dbReference>
<dbReference type="GO" id="GO:0005506">
    <property type="term" value="F:iron ion binding"/>
    <property type="evidence" value="ECO:0007669"/>
    <property type="project" value="UniProtKB-UniRule"/>
</dbReference>
<dbReference type="GO" id="GO:0016226">
    <property type="term" value="P:iron-sulfur cluster assembly"/>
    <property type="evidence" value="ECO:0007669"/>
    <property type="project" value="UniProtKB-UniRule"/>
</dbReference>
<dbReference type="FunFam" id="2.60.300.12:FF:000002">
    <property type="entry name" value="Iron-sulfur cluster insertion protein ErpA"/>
    <property type="match status" value="1"/>
</dbReference>
<dbReference type="Gene3D" id="2.60.300.12">
    <property type="entry name" value="HesB-like domain"/>
    <property type="match status" value="1"/>
</dbReference>
<dbReference type="HAMAP" id="MF_01380">
    <property type="entry name" value="Fe_S_insert_ErpA"/>
    <property type="match status" value="1"/>
</dbReference>
<dbReference type="InterPro" id="IPR000361">
    <property type="entry name" value="FeS_biogenesis"/>
</dbReference>
<dbReference type="InterPro" id="IPR016092">
    <property type="entry name" value="FeS_cluster_insertion"/>
</dbReference>
<dbReference type="InterPro" id="IPR017870">
    <property type="entry name" value="FeS_cluster_insertion_CS"/>
</dbReference>
<dbReference type="InterPro" id="IPR023063">
    <property type="entry name" value="FeS_cluster_insertion_RrpA"/>
</dbReference>
<dbReference type="InterPro" id="IPR035903">
    <property type="entry name" value="HesB-like_dom_sf"/>
</dbReference>
<dbReference type="NCBIfam" id="TIGR00049">
    <property type="entry name" value="iron-sulfur cluster assembly accessory protein"/>
    <property type="match status" value="1"/>
</dbReference>
<dbReference type="NCBIfam" id="NF010147">
    <property type="entry name" value="PRK13623.1"/>
    <property type="match status" value="1"/>
</dbReference>
<dbReference type="PANTHER" id="PTHR43011">
    <property type="entry name" value="IRON-SULFUR CLUSTER ASSEMBLY 2 HOMOLOG, MITOCHONDRIAL"/>
    <property type="match status" value="1"/>
</dbReference>
<dbReference type="PANTHER" id="PTHR43011:SF1">
    <property type="entry name" value="IRON-SULFUR CLUSTER ASSEMBLY 2 HOMOLOG, MITOCHONDRIAL"/>
    <property type="match status" value="1"/>
</dbReference>
<dbReference type="Pfam" id="PF01521">
    <property type="entry name" value="Fe-S_biosyn"/>
    <property type="match status" value="1"/>
</dbReference>
<dbReference type="SUPFAM" id="SSF89360">
    <property type="entry name" value="HesB-like domain"/>
    <property type="match status" value="1"/>
</dbReference>
<dbReference type="PROSITE" id="PS01152">
    <property type="entry name" value="HESB"/>
    <property type="match status" value="1"/>
</dbReference>
<proteinExistence type="inferred from homology"/>
<feature type="chain" id="PRO_1000184202" description="Iron-sulfur cluster insertion protein ErpA">
    <location>
        <begin position="1"/>
        <end position="114"/>
    </location>
</feature>
<feature type="binding site" evidence="1">
    <location>
        <position position="42"/>
    </location>
    <ligand>
        <name>iron-sulfur cluster</name>
        <dbReference type="ChEBI" id="CHEBI:30408"/>
    </ligand>
</feature>
<feature type="binding site" evidence="1">
    <location>
        <position position="106"/>
    </location>
    <ligand>
        <name>iron-sulfur cluster</name>
        <dbReference type="ChEBI" id="CHEBI:30408"/>
    </ligand>
</feature>
<feature type="binding site" evidence="1">
    <location>
        <position position="108"/>
    </location>
    <ligand>
        <name>iron-sulfur cluster</name>
        <dbReference type="ChEBI" id="CHEBI:30408"/>
    </ligand>
</feature>